<evidence type="ECO:0000250" key="1">
    <source>
        <dbReference type="UniProtKB" id="Q58989"/>
    </source>
</evidence>
<evidence type="ECO:0000269" key="2">
    <source>
    </source>
</evidence>
<evidence type="ECO:0000269" key="3">
    <source>
    </source>
</evidence>
<evidence type="ECO:0000305" key="4"/>
<evidence type="ECO:0000305" key="5">
    <source>
    </source>
</evidence>
<evidence type="ECO:0000305" key="6">
    <source>
    </source>
</evidence>
<evidence type="ECO:0007829" key="7">
    <source>
        <dbReference type="PDB" id="1RKU"/>
    </source>
</evidence>
<evidence type="ECO:0007829" key="8">
    <source>
        <dbReference type="PDB" id="1RKV"/>
    </source>
</evidence>
<organism>
    <name type="scientific">Pseudomonas aeruginosa (strain ATCC 15692 / DSM 22644 / CIP 104116 / JCM 14847 / LMG 12228 / 1C / PRS 101 / PAO1)</name>
    <dbReference type="NCBI Taxonomy" id="208964"/>
    <lineage>
        <taxon>Bacteria</taxon>
        <taxon>Pseudomonadati</taxon>
        <taxon>Pseudomonadota</taxon>
        <taxon>Gammaproteobacteria</taxon>
        <taxon>Pseudomonadales</taxon>
        <taxon>Pseudomonadaceae</taxon>
        <taxon>Pseudomonas</taxon>
    </lineage>
</organism>
<feature type="chain" id="PRO_0000429057" description="Phosphoserine phosphatase ThrH">
    <location>
        <begin position="1"/>
        <end position="205"/>
    </location>
</feature>
<feature type="active site" description="Nucleophile" evidence="3">
    <location>
        <position position="7"/>
    </location>
</feature>
<feature type="active site" description="Proton donor" evidence="3">
    <location>
        <position position="9"/>
    </location>
</feature>
<feature type="binding site" evidence="3">
    <location>
        <position position="7"/>
    </location>
    <ligand>
        <name>Mg(2+)</name>
        <dbReference type="ChEBI" id="CHEBI:18420"/>
    </ligand>
</feature>
<feature type="binding site" evidence="3">
    <location>
        <position position="9"/>
    </location>
    <ligand>
        <name>Mg(2+)</name>
        <dbReference type="ChEBI" id="CHEBI:18420"/>
    </ligand>
</feature>
<feature type="binding site" evidence="1">
    <location>
        <position position="15"/>
    </location>
    <ligand>
        <name>substrate</name>
    </ligand>
</feature>
<feature type="binding site" evidence="1">
    <location>
        <position position="46"/>
    </location>
    <ligand>
        <name>substrate</name>
    </ligand>
</feature>
<feature type="binding site" evidence="1">
    <location>
        <begin position="90"/>
        <end position="91"/>
    </location>
    <ligand>
        <name>substrate</name>
    </ligand>
</feature>
<feature type="binding site" evidence="1">
    <location>
        <position position="133"/>
    </location>
    <ligand>
        <name>substrate</name>
    </ligand>
</feature>
<feature type="binding site" evidence="3">
    <location>
        <position position="152"/>
    </location>
    <ligand>
        <name>Mg(2+)</name>
        <dbReference type="ChEBI" id="CHEBI:18420"/>
    </ligand>
</feature>
<feature type="binding site" evidence="1">
    <location>
        <position position="155"/>
    </location>
    <ligand>
        <name>substrate</name>
    </ligand>
</feature>
<feature type="strand" evidence="7">
    <location>
        <begin position="2"/>
        <end position="9"/>
    </location>
</feature>
<feature type="turn" evidence="7">
    <location>
        <begin position="10"/>
        <end position="12"/>
    </location>
</feature>
<feature type="helix" evidence="7">
    <location>
        <begin position="16"/>
        <end position="24"/>
    </location>
</feature>
<feature type="helix" evidence="7">
    <location>
        <begin position="27"/>
        <end position="30"/>
    </location>
</feature>
<feature type="turn" evidence="7">
    <location>
        <begin position="33"/>
        <end position="35"/>
    </location>
</feature>
<feature type="helix" evidence="7">
    <location>
        <begin position="39"/>
        <end position="52"/>
    </location>
</feature>
<feature type="helix" evidence="7">
    <location>
        <begin position="57"/>
        <end position="64"/>
    </location>
</feature>
<feature type="helix" evidence="7">
    <location>
        <begin position="73"/>
        <end position="81"/>
    </location>
</feature>
<feature type="strand" evidence="7">
    <location>
        <begin position="84"/>
        <end position="93"/>
    </location>
</feature>
<feature type="helix" evidence="7">
    <location>
        <begin position="94"/>
        <end position="103"/>
    </location>
</feature>
<feature type="strand" evidence="7">
    <location>
        <begin position="109"/>
        <end position="116"/>
    </location>
</feature>
<feature type="strand" evidence="7">
    <location>
        <begin position="122"/>
        <end position="126"/>
    </location>
</feature>
<feature type="strand" evidence="7">
    <location>
        <begin position="129"/>
        <end position="131"/>
    </location>
</feature>
<feature type="helix" evidence="7">
    <location>
        <begin position="132"/>
        <end position="142"/>
    </location>
</feature>
<feature type="strand" evidence="7">
    <location>
        <begin position="146"/>
        <end position="151"/>
    </location>
</feature>
<feature type="helix" evidence="8">
    <location>
        <begin position="154"/>
        <end position="156"/>
    </location>
</feature>
<feature type="helix" evidence="7">
    <location>
        <begin position="157"/>
        <end position="162"/>
    </location>
</feature>
<feature type="strand" evidence="7">
    <location>
        <begin position="163"/>
        <end position="170"/>
    </location>
</feature>
<feature type="helix" evidence="7">
    <location>
        <begin position="173"/>
        <end position="178"/>
    </location>
</feature>
<feature type="helix" evidence="7">
    <location>
        <begin position="188"/>
        <end position="198"/>
    </location>
</feature>
<accession>Q9I2Y2</accession>
<comment type="function">
    <text evidence="2 3">Phosphoserine phosphatase that mediates dephosphorylation of phosphoserine in the serine biosynthesis pathway. Also able to dephosphorylate other substrates such as phospho-L(or D)-threonine, with lower activity. Shows phosphoserine:homoserine phosphotransferase activity by transferring the phosphoryl group to homoserine using phosphoserine as the phosphoryl group donor.</text>
</comment>
<comment type="catalytic activity">
    <reaction evidence="3">
        <text>O-phospho-L-serine + H2O = L-serine + phosphate</text>
        <dbReference type="Rhea" id="RHEA:21208"/>
        <dbReference type="ChEBI" id="CHEBI:15377"/>
        <dbReference type="ChEBI" id="CHEBI:33384"/>
        <dbReference type="ChEBI" id="CHEBI:43474"/>
        <dbReference type="ChEBI" id="CHEBI:57524"/>
        <dbReference type="EC" id="3.1.3.3"/>
    </reaction>
</comment>
<comment type="catalytic activity">
    <reaction evidence="3">
        <text>O-phospho-D-serine + H2O = D-serine + phosphate</text>
        <dbReference type="Rhea" id="RHEA:24873"/>
        <dbReference type="ChEBI" id="CHEBI:15377"/>
        <dbReference type="ChEBI" id="CHEBI:35247"/>
        <dbReference type="ChEBI" id="CHEBI:43474"/>
        <dbReference type="ChEBI" id="CHEBI:58680"/>
        <dbReference type="EC" id="3.1.3.3"/>
    </reaction>
</comment>
<comment type="cofactor">
    <cofactor evidence="3">
        <name>Mg(2+)</name>
        <dbReference type="ChEBI" id="CHEBI:18420"/>
    </cofactor>
    <text evidence="3">Binds 1 Mg(2+) ion per subunit.</text>
</comment>
<comment type="biophysicochemical properties">
    <kinetics>
        <KM evidence="3">0.207 mM for O-phospho-L-serine</KM>
        <text>kcat is 13.4 min(-1) with O-phospho-L-serine as substrate.</text>
    </kinetics>
</comment>
<comment type="pathway">
    <text>Amino-acid biosynthesis; L-serine biosynthesis; L-serine from 3-phospho-D-glycerate: step 3/3.</text>
</comment>
<comment type="similarity">
    <text evidence="4">Belongs to the thrH family.</text>
</comment>
<comment type="caution">
    <text evidence="5 6">Its ability to complement a strain lacking the homoserine kinase thrB gene suggested that it acts as a homoserine kinase (PubMed:10220164). The ability to rescue a thrB mutant is explained by the phosphoserine:homoserine phosphotransferase activity in presence of phosphoserine, in a mechanism different from homoserine kinase, suggesting it is inappropriate to define it as a homoserine kinase (PubMed:14699121).</text>
</comment>
<reference key="1">
    <citation type="journal article" date="2000" name="Nature">
        <title>Complete genome sequence of Pseudomonas aeruginosa PAO1, an opportunistic pathogen.</title>
        <authorList>
            <person name="Stover C.K."/>
            <person name="Pham X.-Q.T."/>
            <person name="Erwin A.L."/>
            <person name="Mizoguchi S.D."/>
            <person name="Warrener P."/>
            <person name="Hickey M.J."/>
            <person name="Brinkman F.S.L."/>
            <person name="Hufnagle W.O."/>
            <person name="Kowalik D.J."/>
            <person name="Lagrou M."/>
            <person name="Garber R.L."/>
            <person name="Goltry L."/>
            <person name="Tolentino E."/>
            <person name="Westbrock-Wadman S."/>
            <person name="Yuan Y."/>
            <person name="Brody L.L."/>
            <person name="Coulter S.N."/>
            <person name="Folger K.R."/>
            <person name="Kas A."/>
            <person name="Larbig K."/>
            <person name="Lim R.M."/>
            <person name="Smith K.A."/>
            <person name="Spencer D.H."/>
            <person name="Wong G.K.-S."/>
            <person name="Wu Z."/>
            <person name="Paulsen I.T."/>
            <person name="Reizer J."/>
            <person name="Saier M.H. Jr."/>
            <person name="Hancock R.E.W."/>
            <person name="Lory S."/>
            <person name="Olson M.V."/>
        </authorList>
    </citation>
    <scope>NUCLEOTIDE SEQUENCE [LARGE SCALE GENOMIC DNA]</scope>
    <source>
        <strain>ATCC 15692 / DSM 22644 / CIP 104116 / JCM 14847 / LMG 12228 / 1C / PRS 101 / PAO1</strain>
    </source>
</reference>
<reference key="2">
    <citation type="journal article" date="1999" name="Microbiology">
        <title>ThrH, a homoserine kinase isozyme with in vivo phosphoserine phosphatase activity in Pseudomonas aeruginosa.</title>
        <authorList>
            <person name="Patte J.C."/>
            <person name="Clepet C."/>
            <person name="Bally M."/>
            <person name="Borne F."/>
            <person name="Mejean V."/>
            <person name="Foglino M."/>
        </authorList>
    </citation>
    <scope>FUNCTION</scope>
    <source>
        <strain>ATCC 15692 / DSM 22644 / CIP 104116 / JCM 14847 / LMG 12228 / 1C / PRS 101 / PAO1</strain>
    </source>
</reference>
<reference key="3">
    <citation type="journal article" date="2004" name="J. Biol. Chem.">
        <title>The thrH gene product of Pseudomonas aeruginosa is a dual activity enzyme with a novel phosphoserine:homoserine phosphotransferase activity.</title>
        <authorList>
            <person name="Singh S.K."/>
            <person name="Yang K."/>
            <person name="Karthikeyan S."/>
            <person name="Huynh T."/>
            <person name="Zhang X."/>
            <person name="Phillips M.A."/>
            <person name="Zhang H."/>
        </authorList>
    </citation>
    <scope>X-RAY CRYSTALLOGRAPHY (1.47 ANGSTROMS) IN COMPLEX WITH MAGNESIUM AND PHOSPHATE</scope>
    <scope>FUNCTION</scope>
    <scope>CATALYTIC ACTIVITY</scope>
    <scope>COFACTOR</scope>
    <scope>BIOPHYSICOCHEMICAL PROPERTIES</scope>
    <scope>ACTIVE SITE</scope>
    <source>
        <strain>ATCC 17933</strain>
    </source>
</reference>
<keyword id="KW-0002">3D-structure</keyword>
<keyword id="KW-0028">Amino-acid biosynthesis</keyword>
<keyword id="KW-0378">Hydrolase</keyword>
<keyword id="KW-0460">Magnesium</keyword>
<keyword id="KW-0479">Metal-binding</keyword>
<keyword id="KW-1185">Reference proteome</keyword>
<keyword id="KW-0718">Serine biosynthesis</keyword>
<gene>
    <name type="primary">thrH</name>
    <name type="ordered locus">PA1757</name>
</gene>
<name>THRH_PSEAE</name>
<dbReference type="EC" id="3.1.3.3" evidence="3"/>
<dbReference type="EMBL" id="AE004091">
    <property type="protein sequence ID" value="AAG05146.1"/>
    <property type="molecule type" value="Genomic_DNA"/>
</dbReference>
<dbReference type="PIR" id="A83427">
    <property type="entry name" value="A83427"/>
</dbReference>
<dbReference type="RefSeq" id="NP_250448.1">
    <property type="nucleotide sequence ID" value="NC_002516.2"/>
</dbReference>
<dbReference type="RefSeq" id="WP_003098078.1">
    <property type="nucleotide sequence ID" value="NZ_QZGE01000003.1"/>
</dbReference>
<dbReference type="PDB" id="1RKU">
    <property type="method" value="X-ray"/>
    <property type="resolution" value="1.47 A"/>
    <property type="chains" value="A/B=1-205"/>
</dbReference>
<dbReference type="PDB" id="1RKV">
    <property type="method" value="X-ray"/>
    <property type="resolution" value="1.90 A"/>
    <property type="chains" value="A/B=1-205"/>
</dbReference>
<dbReference type="PDBsum" id="1RKU"/>
<dbReference type="PDBsum" id="1RKV"/>
<dbReference type="SMR" id="Q9I2Y2"/>
<dbReference type="STRING" id="208964.PA1757"/>
<dbReference type="PaxDb" id="208964-PA1757"/>
<dbReference type="GeneID" id="877969"/>
<dbReference type="KEGG" id="pae:PA1757"/>
<dbReference type="PATRIC" id="fig|208964.12.peg.1820"/>
<dbReference type="PseudoCAP" id="PA1757"/>
<dbReference type="HOGENOM" id="CLU_097498_0_0_6"/>
<dbReference type="InParanoid" id="Q9I2Y2"/>
<dbReference type="OrthoDB" id="9801134at2"/>
<dbReference type="PhylomeDB" id="Q9I2Y2"/>
<dbReference type="BioCyc" id="PAER208964:G1FZ6-1788-MONOMER"/>
<dbReference type="UniPathway" id="UPA00135">
    <property type="reaction ID" value="UER00198"/>
</dbReference>
<dbReference type="EvolutionaryTrace" id="Q9I2Y2"/>
<dbReference type="Proteomes" id="UP000002438">
    <property type="component" value="Chromosome"/>
</dbReference>
<dbReference type="GO" id="GO:0005737">
    <property type="term" value="C:cytoplasm"/>
    <property type="evidence" value="ECO:0000318"/>
    <property type="project" value="GO_Central"/>
</dbReference>
<dbReference type="GO" id="GO:0046820">
    <property type="term" value="F:4-amino-4-deoxychorismate synthase activity"/>
    <property type="evidence" value="ECO:0000250"/>
    <property type="project" value="PseudoCAP"/>
</dbReference>
<dbReference type="GO" id="GO:0036424">
    <property type="term" value="F:L-phosphoserine phosphatase activity"/>
    <property type="evidence" value="ECO:0000314"/>
    <property type="project" value="UniProtKB"/>
</dbReference>
<dbReference type="GO" id="GO:0000287">
    <property type="term" value="F:magnesium ion binding"/>
    <property type="evidence" value="ECO:0000314"/>
    <property type="project" value="UniProtKB"/>
</dbReference>
<dbReference type="GO" id="GO:0043899">
    <property type="term" value="F:phosphoserine:homoserine phosphotransferase activity"/>
    <property type="evidence" value="ECO:0000314"/>
    <property type="project" value="PseudoCAP"/>
</dbReference>
<dbReference type="GO" id="GO:0016311">
    <property type="term" value="P:dephosphorylation"/>
    <property type="evidence" value="ECO:0000314"/>
    <property type="project" value="UniProtKB"/>
</dbReference>
<dbReference type="GO" id="GO:0006564">
    <property type="term" value="P:L-serine biosynthetic process"/>
    <property type="evidence" value="ECO:0000318"/>
    <property type="project" value="GO_Central"/>
</dbReference>
<dbReference type="GO" id="GO:0046654">
    <property type="term" value="P:tetrahydrofolate biosynthetic process"/>
    <property type="evidence" value="ECO:0000250"/>
    <property type="project" value="PseudoCAP"/>
</dbReference>
<dbReference type="GO" id="GO:0009088">
    <property type="term" value="P:threonine biosynthetic process"/>
    <property type="evidence" value="ECO:0000315"/>
    <property type="project" value="PseudoCAP"/>
</dbReference>
<dbReference type="CDD" id="cd02607">
    <property type="entry name" value="HAD_ThrH_like"/>
    <property type="match status" value="1"/>
</dbReference>
<dbReference type="Gene3D" id="3.40.50.1000">
    <property type="entry name" value="HAD superfamily/HAD-like"/>
    <property type="match status" value="1"/>
</dbReference>
<dbReference type="Gene3D" id="3.90.1470.10">
    <property type="entry name" value="thrh gene product, domain 2"/>
    <property type="match status" value="1"/>
</dbReference>
<dbReference type="InterPro" id="IPR050582">
    <property type="entry name" value="HAD-like_SerB"/>
</dbReference>
<dbReference type="InterPro" id="IPR036412">
    <property type="entry name" value="HAD-like_sf"/>
</dbReference>
<dbReference type="InterPro" id="IPR023214">
    <property type="entry name" value="HAD_sf"/>
</dbReference>
<dbReference type="InterPro" id="IPR011863">
    <property type="entry name" value="HSK-PSP"/>
</dbReference>
<dbReference type="NCBIfam" id="TIGR02137">
    <property type="entry name" value="HSK-PSP"/>
    <property type="match status" value="1"/>
</dbReference>
<dbReference type="NCBIfam" id="NF010109">
    <property type="entry name" value="PRK13582.1"/>
    <property type="match status" value="1"/>
</dbReference>
<dbReference type="PANTHER" id="PTHR43344">
    <property type="entry name" value="PHOSPHOSERINE PHOSPHATASE"/>
    <property type="match status" value="1"/>
</dbReference>
<dbReference type="PANTHER" id="PTHR43344:SF2">
    <property type="entry name" value="PHOSPHOSERINE PHOSPHATASE"/>
    <property type="match status" value="1"/>
</dbReference>
<dbReference type="Pfam" id="PF00702">
    <property type="entry name" value="Hydrolase"/>
    <property type="match status" value="1"/>
</dbReference>
<dbReference type="SUPFAM" id="SSF56784">
    <property type="entry name" value="HAD-like"/>
    <property type="match status" value="1"/>
</dbReference>
<protein>
    <recommendedName>
        <fullName>Phosphoserine phosphatase ThrH</fullName>
        <shortName>PSP</shortName>
        <shortName>PSPase</shortName>
        <ecNumber evidence="3">3.1.3.3</ecNumber>
    </recommendedName>
</protein>
<sequence length="205" mass="23533">MEIACLDLEGVLVPEIWIAFAEKTGIDALKATTRDIPDYDVLMKQRLRILDEHGLKLGDIQEVIATLKPLEGAVEFVDWLRERFQVVILSDTFYEFSQPLMRQLGFPTLLCHKLEIDDSDRVVGYQLRQKDPKRQSVIAFKSLYYRVIAAGDSYNDTTMLSEAHAGILFHAPENVIREFPQFPAVHTYEDLKREFLKASSRSLSL</sequence>
<proteinExistence type="evidence at protein level"/>